<organism>
    <name type="scientific">Rhizomucor miehei</name>
    <dbReference type="NCBI Taxonomy" id="4839"/>
    <lineage>
        <taxon>Eukaryota</taxon>
        <taxon>Fungi</taxon>
        <taxon>Fungi incertae sedis</taxon>
        <taxon>Mucoromycota</taxon>
        <taxon>Mucoromycotina</taxon>
        <taxon>Mucoromycetes</taxon>
        <taxon>Mucorales</taxon>
        <taxon>Lichtheimiaceae</taxon>
        <taxon>Rhizomucor</taxon>
    </lineage>
</organism>
<dbReference type="EC" id="3.1.1.3"/>
<dbReference type="PDB" id="1TGL">
    <property type="method" value="X-ray"/>
    <property type="resolution" value="1.90 A"/>
    <property type="chains" value="A=95-362"/>
</dbReference>
<dbReference type="PDB" id="3TGL">
    <property type="method" value="X-ray"/>
    <property type="resolution" value="1.90 A"/>
    <property type="chains" value="A=95-363"/>
</dbReference>
<dbReference type="PDB" id="4TGL">
    <property type="method" value="X-ray"/>
    <property type="resolution" value="2.60 A"/>
    <property type="chains" value="A=95-363"/>
</dbReference>
<dbReference type="PDB" id="5TGL">
    <property type="method" value="X-ray"/>
    <property type="resolution" value="3.00 A"/>
    <property type="chains" value="A=95-363"/>
</dbReference>
<dbReference type="PDB" id="6QPP">
    <property type="method" value="X-ray"/>
    <property type="resolution" value="1.49 A"/>
    <property type="chains" value="A=1-363"/>
</dbReference>
<dbReference type="PDB" id="6QPR">
    <property type="method" value="X-ray"/>
    <property type="resolution" value="1.45 A"/>
    <property type="chains" value="A=1-363"/>
</dbReference>
<dbReference type="PDBsum" id="1TGL"/>
<dbReference type="PDBsum" id="3TGL"/>
<dbReference type="PDBsum" id="4TGL"/>
<dbReference type="PDBsum" id="5TGL"/>
<dbReference type="PDBsum" id="6QPP"/>
<dbReference type="PDBsum" id="6QPR"/>
<dbReference type="SMR" id="P19515"/>
<dbReference type="ESTHER" id="rhimi-lipas">
    <property type="family name" value="Lipase_3"/>
</dbReference>
<dbReference type="BRENDA" id="3.1.1.3">
    <property type="organism ID" value="3454"/>
</dbReference>
<dbReference type="SABIO-RK" id="P19515"/>
<dbReference type="EvolutionaryTrace" id="P19515"/>
<dbReference type="GO" id="GO:0046872">
    <property type="term" value="F:metal ion binding"/>
    <property type="evidence" value="ECO:0007669"/>
    <property type="project" value="UniProtKB-KW"/>
</dbReference>
<dbReference type="GO" id="GO:0004806">
    <property type="term" value="F:triacylglycerol lipase activity"/>
    <property type="evidence" value="ECO:0007669"/>
    <property type="project" value="UniProtKB-EC"/>
</dbReference>
<dbReference type="GO" id="GO:0016042">
    <property type="term" value="P:lipid catabolic process"/>
    <property type="evidence" value="ECO:0007669"/>
    <property type="project" value="UniProtKB-KW"/>
</dbReference>
<dbReference type="CDD" id="cd00519">
    <property type="entry name" value="Lipase_3"/>
    <property type="match status" value="1"/>
</dbReference>
<dbReference type="Gene3D" id="3.40.50.1820">
    <property type="entry name" value="alpha/beta hydrolase"/>
    <property type="match status" value="1"/>
</dbReference>
<dbReference type="InterPro" id="IPR029058">
    <property type="entry name" value="AB_hydrolase_fold"/>
</dbReference>
<dbReference type="InterPro" id="IPR002921">
    <property type="entry name" value="Fungal_lipase-type"/>
</dbReference>
<dbReference type="InterPro" id="IPR051218">
    <property type="entry name" value="Sec_MonoDiacylglyc_Lipase"/>
</dbReference>
<dbReference type="PANTHER" id="PTHR45856">
    <property type="entry name" value="ALPHA/BETA-HYDROLASES SUPERFAMILY PROTEIN"/>
    <property type="match status" value="1"/>
</dbReference>
<dbReference type="PANTHER" id="PTHR45856:SF24">
    <property type="entry name" value="FUNGAL LIPASE-LIKE DOMAIN-CONTAINING PROTEIN"/>
    <property type="match status" value="1"/>
</dbReference>
<dbReference type="Pfam" id="PF01764">
    <property type="entry name" value="Lipase_3"/>
    <property type="match status" value="1"/>
</dbReference>
<dbReference type="SUPFAM" id="SSF53474">
    <property type="entry name" value="alpha/beta-Hydrolases"/>
    <property type="match status" value="1"/>
</dbReference>
<dbReference type="PROSITE" id="PS00120">
    <property type="entry name" value="LIPASE_SER"/>
    <property type="match status" value="1"/>
</dbReference>
<comment type="catalytic activity">
    <reaction>
        <text>a triacylglycerol + H2O = a diacylglycerol + a fatty acid + H(+)</text>
        <dbReference type="Rhea" id="RHEA:12044"/>
        <dbReference type="ChEBI" id="CHEBI:15377"/>
        <dbReference type="ChEBI" id="CHEBI:15378"/>
        <dbReference type="ChEBI" id="CHEBI:17855"/>
        <dbReference type="ChEBI" id="CHEBI:18035"/>
        <dbReference type="ChEBI" id="CHEBI:28868"/>
        <dbReference type="EC" id="3.1.1.3"/>
    </reaction>
</comment>
<comment type="similarity">
    <text evidence="4">Belongs to the AB hydrolase superfamily. Lipase family.</text>
</comment>
<proteinExistence type="evidence at protein level"/>
<keyword id="KW-0002">3D-structure</keyword>
<keyword id="KW-0106">Calcium</keyword>
<keyword id="KW-1015">Disulfide bond</keyword>
<keyword id="KW-0378">Hydrolase</keyword>
<keyword id="KW-0442">Lipid degradation</keyword>
<keyword id="KW-0443">Lipid metabolism</keyword>
<keyword id="KW-0479">Metal-binding</keyword>
<keyword id="KW-0732">Signal</keyword>
<keyword id="KW-0865">Zymogen</keyword>
<evidence type="ECO:0000250" key="1"/>
<evidence type="ECO:0000256" key="2">
    <source>
        <dbReference type="SAM" id="MobiDB-lite"/>
    </source>
</evidence>
<evidence type="ECO:0000269" key="3">
    <source>
    </source>
</evidence>
<evidence type="ECO:0000305" key="4"/>
<evidence type="ECO:0000305" key="5">
    <source>
    </source>
</evidence>
<evidence type="ECO:0007829" key="6">
    <source>
        <dbReference type="PDB" id="6QPR"/>
    </source>
</evidence>
<protein>
    <recommendedName>
        <fullName>Lipase</fullName>
        <ecNumber>3.1.1.3</ecNumber>
    </recommendedName>
    <alternativeName>
        <fullName>Triacylglycerol lipase</fullName>
    </alternativeName>
</protein>
<name>LIP_RHIMI</name>
<reference key="1">
    <citation type="journal article" date="1988" name="Lipids">
        <title>Rhizomucor miehei triglyceride lipase is synthesized as a precursor.</title>
        <authorList>
            <person name="Boel E."/>
            <person name="Huge-Jensen B."/>
            <person name="Christensen M."/>
            <person name="Thim L."/>
            <person name="Fiil N.P."/>
        </authorList>
    </citation>
    <scope>NUCLEOTIDE SEQUENCE</scope>
</reference>
<reference key="2">
    <citation type="journal article" date="1990" name="Nature">
        <title>A serine protease triad forms the catalytic centre of a triacylglycerol lipase.</title>
        <authorList>
            <person name="Brady L."/>
            <person name="Brzozowski A.M."/>
            <person name="Derewenda Z.S."/>
            <person name="Dodson E.J."/>
            <person name="Dodson G.G."/>
            <person name="Tolley S."/>
            <person name="Turkenburg J.P."/>
            <person name="Christiansen L."/>
            <person name="Huge-Jensen B."/>
            <person name="Norskov L."/>
            <person name="Thim L."/>
            <person name="Menge U."/>
        </authorList>
    </citation>
    <scope>X-RAY CRYSTALLOGRAPHY (1.9 ANGSTROMS)</scope>
</reference>
<reference key="3">
    <citation type="journal article" date="1991" name="Nature">
        <title>A model for interfacial activation in lipases from the structure of a fungal lipase-inhibitor complex.</title>
        <authorList>
            <person name="Brzozowski A.M."/>
            <person name="Derewenda U."/>
            <person name="Derewenda Z.S."/>
            <person name="Dodson G.G."/>
            <person name="Lawson D.M."/>
            <person name="Turkenburg J.P."/>
            <person name="Bjorkling F."/>
            <person name="Huge-Jensen B."/>
            <person name="Patkar S.A."/>
            <person name="Thim L."/>
        </authorList>
    </citation>
    <scope>X-RAY CRYSTALLOGRAPHY (3.00 ANGSTROMS)</scope>
</reference>
<reference key="4">
    <citation type="journal article" date="1992" name="Biochemistry">
        <title>Catalysis at the interface: the anatomy of a conformational change in a triglyceride lipase.</title>
        <authorList>
            <person name="Derewenda U."/>
            <person name="Brzozowski A.M."/>
            <person name="Lawson D.M."/>
            <person name="Derewenda Z.S."/>
        </authorList>
    </citation>
    <scope>X-RAY CRYSTALLOGRAPHY (2.60 ANGSTROMS)</scope>
    <scope>DISULFIDE BOND</scope>
</reference>
<reference key="5">
    <citation type="journal article" date="1992" name="J. Mol. Biol.">
        <title>The crystal and molecular structure of the Rhizomucor miehei triacylglyceride lipase at 1.9-A resolution.</title>
        <authorList>
            <person name="Derewenda Z.S."/>
            <person name="Derewenda U."/>
            <person name="Dodson G.G."/>
        </authorList>
    </citation>
    <scope>X-RAY CRYSTALLOGRAPHY (1.9 ANGSTROMS)</scope>
    <scope>SEQUENCE REVISION TO 250</scope>
</reference>
<sequence>MVLKQRANYLGFLIVFFTAFLVEAVPIKRQSNSTVDSLPPLIPSRTSAPSSSPSTTDPEAPAMSRNGPLPSDVETKYGMALNATSYPDSVVQAMSIDGGIRAATSQEINELTYYTTLSANSYCRTVIPGATWDCIHCDATEDLKIIKTWSTLIYDTNAMVARGDSEKTIYIVFRGSSSIRNWIADLTFVPVSYPPVSGTKVHKGFLDSYGEVQNELVATVLDQFKQYPSYKVAVTGHSLGGATALLCALDLYQREEGLSSSNLFLYTQGQPRVGDPAFANYVVSTGIPYRRTVNERDIVPHLPPAAFGFLHAGEEYWITDNSPETVQVCTSDLETSDCSNSIVPFTSVLDHLSYFGINTGLCT</sequence>
<accession>P19515</accession>
<feature type="signal peptide">
    <location>
        <begin position="1"/>
        <end position="24"/>
    </location>
</feature>
<feature type="propeptide" id="PRO_0000017731">
    <location>
        <begin position="25"/>
        <end position="94"/>
    </location>
</feature>
<feature type="chain" id="PRO_0000017732" description="Lipase">
    <location>
        <begin position="95"/>
        <end position="363"/>
    </location>
</feature>
<feature type="region of interest" description="Disordered" evidence="2">
    <location>
        <begin position="33"/>
        <end position="69"/>
    </location>
</feature>
<feature type="compositionally biased region" description="Low complexity" evidence="2">
    <location>
        <begin position="43"/>
        <end position="62"/>
    </location>
</feature>
<feature type="active site" description="Nucleophile" evidence="5">
    <location>
        <position position="238"/>
    </location>
</feature>
<feature type="active site" description="Charge relay system" evidence="5">
    <location>
        <position position="297"/>
    </location>
</feature>
<feature type="active site" description="Charge relay system" evidence="5">
    <location>
        <position position="351"/>
    </location>
</feature>
<feature type="binding site" evidence="1">
    <location>
        <position position="350"/>
    </location>
    <ligand>
        <name>Ca(2+)</name>
        <dbReference type="ChEBI" id="CHEBI:29108"/>
    </ligand>
</feature>
<feature type="disulfide bond" evidence="3">
    <location>
        <begin position="123"/>
        <end position="362"/>
    </location>
</feature>
<feature type="disulfide bond" evidence="3">
    <location>
        <begin position="134"/>
        <end position="137"/>
    </location>
</feature>
<feature type="disulfide bond" evidence="3">
    <location>
        <begin position="329"/>
        <end position="338"/>
    </location>
</feature>
<feature type="helix" evidence="6">
    <location>
        <begin position="43"/>
        <end position="45"/>
    </location>
</feature>
<feature type="helix" evidence="6">
    <location>
        <begin position="60"/>
        <end position="65"/>
    </location>
</feature>
<feature type="strand" evidence="6">
    <location>
        <begin position="79"/>
        <end position="82"/>
    </location>
</feature>
<feature type="strand" evidence="6">
    <location>
        <begin position="100"/>
        <end position="102"/>
    </location>
</feature>
<feature type="helix" evidence="6">
    <location>
        <begin position="105"/>
        <end position="120"/>
    </location>
</feature>
<feature type="turn" evidence="6">
    <location>
        <begin position="124"/>
        <end position="129"/>
    </location>
</feature>
<feature type="helix" evidence="6">
    <location>
        <begin position="137"/>
        <end position="140"/>
    </location>
</feature>
<feature type="strand" evidence="6">
    <location>
        <begin position="143"/>
        <end position="150"/>
    </location>
</feature>
<feature type="turn" evidence="6">
    <location>
        <begin position="152"/>
        <end position="154"/>
    </location>
</feature>
<feature type="strand" evidence="6">
    <location>
        <begin position="157"/>
        <end position="163"/>
    </location>
</feature>
<feature type="turn" evidence="6">
    <location>
        <begin position="164"/>
        <end position="167"/>
    </location>
</feature>
<feature type="strand" evidence="6">
    <location>
        <begin position="168"/>
        <end position="173"/>
    </location>
</feature>
<feature type="helix" evidence="6">
    <location>
        <begin position="179"/>
        <end position="185"/>
    </location>
</feature>
<feature type="strand" evidence="6">
    <location>
        <begin position="190"/>
        <end position="192"/>
    </location>
</feature>
<feature type="strand" evidence="6">
    <location>
        <begin position="200"/>
        <end position="202"/>
    </location>
</feature>
<feature type="helix" evidence="6">
    <location>
        <begin position="203"/>
        <end position="226"/>
    </location>
</feature>
<feature type="strand" evidence="6">
    <location>
        <begin position="230"/>
        <end position="237"/>
    </location>
</feature>
<feature type="helix" evidence="6">
    <location>
        <begin position="239"/>
        <end position="254"/>
    </location>
</feature>
<feature type="turn" evidence="6">
    <location>
        <begin position="260"/>
        <end position="262"/>
    </location>
</feature>
<feature type="strand" evidence="6">
    <location>
        <begin position="263"/>
        <end position="269"/>
    </location>
</feature>
<feature type="helix" evidence="6">
    <location>
        <begin position="276"/>
        <end position="284"/>
    </location>
</feature>
<feature type="strand" evidence="6">
    <location>
        <begin position="289"/>
        <end position="294"/>
    </location>
</feature>
<feature type="helix" evidence="6">
    <location>
        <begin position="299"/>
        <end position="301"/>
    </location>
</feature>
<feature type="helix" evidence="6">
    <location>
        <begin position="305"/>
        <end position="307"/>
    </location>
</feature>
<feature type="strand" evidence="6">
    <location>
        <begin position="312"/>
        <end position="320"/>
    </location>
</feature>
<feature type="turn" evidence="6">
    <location>
        <begin position="321"/>
        <end position="324"/>
    </location>
</feature>
<feature type="strand" evidence="6">
    <location>
        <begin position="325"/>
        <end position="329"/>
    </location>
</feature>
<feature type="strand" evidence="6">
    <location>
        <begin position="336"/>
        <end position="338"/>
    </location>
</feature>
<feature type="helix" evidence="6">
    <location>
        <begin position="339"/>
        <end position="341"/>
    </location>
</feature>
<feature type="helix" evidence="6">
    <location>
        <begin position="349"/>
        <end position="352"/>
    </location>
</feature>
<feature type="strand" evidence="6">
    <location>
        <begin position="357"/>
        <end position="361"/>
    </location>
</feature>